<organismHost>
    <name type="scientific">Homo sapiens</name>
    <name type="common">Human</name>
    <dbReference type="NCBI Taxonomy" id="9606"/>
</organismHost>
<feature type="chain" id="PRO_0000445383" description="Minor capsid protein VP1">
    <location>
        <begin position="1"/>
        <end position="668"/>
    </location>
</feature>
<feature type="region of interest" description="Phospholipase A2-like" evidence="1">
    <location>
        <begin position="11"/>
        <end position="66"/>
    </location>
</feature>
<feature type="region of interest" description="Disordered" evidence="3">
    <location>
        <begin position="107"/>
        <end position="162"/>
    </location>
</feature>
<feature type="short sequence motif" description="Nuclear localization signal" evidence="2">
    <location>
        <begin position="611"/>
        <end position="622"/>
    </location>
</feature>
<feature type="compositionally biased region" description="Gly residues" evidence="3">
    <location>
        <begin position="147"/>
        <end position="162"/>
    </location>
</feature>
<feature type="splice variant" id="VSP_059859" description="In isoform Major capsid protein VP3.">
    <location>
        <begin position="1"/>
        <end position="129"/>
    </location>
</feature>
<feature type="splice variant" id="VSP_059860" description="In isoform Minor capsid protein VP2.">
    <location>
        <begin position="1"/>
        <end position="90"/>
    </location>
</feature>
<feature type="splice variant" id="VSP_059865" description="In isoform Minor capsid protein VP2.">
    <original>V</original>
    <variation>M</variation>
    <location>
        <position position="91"/>
    </location>
</feature>
<reference key="1">
    <citation type="journal article" date="2009" name="PLoS Pathog.">
        <title>A Novel Bocavirus Associated with Acute Gastroenteritis in Australian Children.</title>
        <authorList>
            <person name="Arthur J.L."/>
            <person name="Higgins G.D."/>
            <person name="Davidson G.P."/>
            <person name="Givney R.C."/>
            <person name="Ratcliff R.M."/>
        </authorList>
    </citation>
    <scope>NUCLEOTIDE SEQUENCE [LARGE SCALE GENOMIC DNA]</scope>
    <source>
        <strain>W471</strain>
        <strain>W855</strain>
    </source>
</reference>
<reference key="2">
    <citation type="journal article" date="2017" name="J. Virol.">
        <title>Structural Insights into Human Bocaparvoviruses.</title>
        <authorList>
            <person name="Mietzsch M."/>
            <person name="Kailasan S."/>
            <person name="Garrison J."/>
            <person name="Ilyas M."/>
            <person name="Chipman P."/>
            <person name="Kantola K."/>
            <person name="Janssen M.E."/>
            <person name="Spear J."/>
            <person name="Sousa D."/>
            <person name="McKenna R."/>
            <person name="Brown K."/>
            <person name="Soderlund-Venermo M."/>
            <person name="Baker T."/>
            <person name="Agbandje-McKenna M."/>
        </authorList>
    </citation>
    <scope>STRUCTURE BY ELECTRON MICROSCOPY (2.80 ANGSTROMS)</scope>
</reference>
<proteinExistence type="evidence at protein level"/>
<organism>
    <name type="scientific">Human bocavirus 3</name>
    <name type="common">HBoV3</name>
    <name type="synonym">Adelavirus W471</name>
    <dbReference type="NCBI Taxonomy" id="638313"/>
    <lineage>
        <taxon>Viruses</taxon>
        <taxon>Monodnaviria</taxon>
        <taxon>Shotokuvirae</taxon>
        <taxon>Cossaviricota</taxon>
        <taxon>Quintoviricetes</taxon>
        <taxon>Piccovirales</taxon>
        <taxon>Parvoviridae</taxon>
        <taxon>Parvovirinae</taxon>
        <taxon>Bocaparvovirus</taxon>
        <taxon>Bocaparvovirus primate1</taxon>
    </lineage>
</organism>
<evidence type="ECO:0000250" key="1">
    <source>
        <dbReference type="UniProtKB" id="Q3YPH4"/>
    </source>
</evidence>
<evidence type="ECO:0000250" key="2">
    <source>
        <dbReference type="UniProtKB" id="Q9PZT0"/>
    </source>
</evidence>
<evidence type="ECO:0000256" key="3">
    <source>
        <dbReference type="SAM" id="MobiDB-lite"/>
    </source>
</evidence>
<evidence type="ECO:0000305" key="4"/>
<keyword id="KW-0002">3D-structure</keyword>
<keyword id="KW-0024">Alternative initiation</keyword>
<keyword id="KW-0167">Capsid protein</keyword>
<keyword id="KW-1035">Host cytoplasm</keyword>
<keyword id="KW-1048">Host nucleus</keyword>
<keyword id="KW-0378">Hydrolase</keyword>
<keyword id="KW-0442">Lipid degradation</keyword>
<keyword id="KW-0443">Lipid metabolism</keyword>
<keyword id="KW-1140">T=1 icosahedral capsid protein</keyword>
<keyword id="KW-0946">Virion</keyword>
<protein>
    <recommendedName>
        <fullName>Minor capsid protein VP1</fullName>
        <ecNumber evidence="1">3.1.1.4</ecNumber>
    </recommendedName>
</protein>
<dbReference type="EC" id="3.1.1.4" evidence="1"/>
<dbReference type="EMBL" id="EU918736">
    <property type="protein sequence ID" value="ACH81929.1"/>
    <property type="molecule type" value="Genomic_DNA"/>
</dbReference>
<dbReference type="EMBL" id="FJ948861">
    <property type="protein sequence ID" value="ACR43454.1"/>
    <property type="molecule type" value="Genomic_DNA"/>
</dbReference>
<dbReference type="EMBL" id="EU918736">
    <property type="protein sequence ID" value="ACH81930.1"/>
    <property type="molecule type" value="Genomic_DNA"/>
</dbReference>
<dbReference type="EMBL" id="FJ948861">
    <property type="protein sequence ID" value="ACR43455.1"/>
    <property type="molecule type" value="Genomic_DNA"/>
</dbReference>
<dbReference type="RefSeq" id="YP_002808456.1">
    <molecule id="C1IWT2-1"/>
    <property type="nucleotide sequence ID" value="NC_012564.1"/>
</dbReference>
<dbReference type="RefSeq" id="YP_002808457.1">
    <molecule id="C1IWT2-3"/>
    <property type="nucleotide sequence ID" value="NC_012564.1"/>
</dbReference>
<dbReference type="PDB" id="5US7">
    <property type="method" value="EM"/>
    <property type="resolution" value="2.80 A"/>
    <property type="chains" value="1/2/3/4/5/6/7/8/A/B/C/D/E/F/G/H/I/J/K/L/M/N/O/P/Q/R/S/T/U/V/W/X/Y/Z/a/b/c/d/e/f/g/h/i/j/k/l/m/n/o/p/q/r/s/t/u/v/w/x/y/z=130-668"/>
</dbReference>
<dbReference type="PDBsum" id="5US7"/>
<dbReference type="EMDB" id="EMD-8604"/>
<dbReference type="SMR" id="C1IWT2"/>
<dbReference type="DNASU" id="7768238"/>
<dbReference type="KEGG" id="vg:7768238"/>
<dbReference type="KEGG" id="vg:7768239"/>
<dbReference type="OrthoDB" id="1726at10239"/>
<dbReference type="Proteomes" id="UP000128541">
    <property type="component" value="Genome"/>
</dbReference>
<dbReference type="Proteomes" id="UP000163519">
    <property type="component" value="Genome"/>
</dbReference>
<dbReference type="GO" id="GO:0030430">
    <property type="term" value="C:host cell cytoplasm"/>
    <property type="evidence" value="ECO:0007669"/>
    <property type="project" value="UniProtKB-SubCell"/>
</dbReference>
<dbReference type="GO" id="GO:0042025">
    <property type="term" value="C:host cell nucleus"/>
    <property type="evidence" value="ECO:0007669"/>
    <property type="project" value="UniProtKB-SubCell"/>
</dbReference>
<dbReference type="GO" id="GO:0039615">
    <property type="term" value="C:T=1 icosahedral viral capsid"/>
    <property type="evidence" value="ECO:0007669"/>
    <property type="project" value="UniProtKB-KW"/>
</dbReference>
<dbReference type="GO" id="GO:0004623">
    <property type="term" value="F:phospholipase A2 activity"/>
    <property type="evidence" value="ECO:0007669"/>
    <property type="project" value="UniProtKB-EC"/>
</dbReference>
<dbReference type="GO" id="GO:0005198">
    <property type="term" value="F:structural molecule activity"/>
    <property type="evidence" value="ECO:0007669"/>
    <property type="project" value="InterPro"/>
</dbReference>
<dbReference type="GO" id="GO:0016042">
    <property type="term" value="P:lipid catabolic process"/>
    <property type="evidence" value="ECO:0007669"/>
    <property type="project" value="UniProtKB-KW"/>
</dbReference>
<dbReference type="Gene3D" id="2.170.30.10">
    <property type="entry name" value="Parvovirus coat protein VP1/VP2"/>
    <property type="match status" value="1"/>
</dbReference>
<dbReference type="InterPro" id="IPR016184">
    <property type="entry name" value="Capsid/spike_ssDNA_virus"/>
</dbReference>
<dbReference type="InterPro" id="IPR001403">
    <property type="entry name" value="Parvovirus_coat"/>
</dbReference>
<dbReference type="InterPro" id="IPR013607">
    <property type="entry name" value="Phospholipase_A2-like"/>
</dbReference>
<dbReference type="InterPro" id="IPR036952">
    <property type="entry name" value="VP1/VP2"/>
</dbReference>
<dbReference type="Pfam" id="PF00740">
    <property type="entry name" value="Parvo_coat"/>
    <property type="match status" value="2"/>
</dbReference>
<dbReference type="Pfam" id="PF08398">
    <property type="entry name" value="Phospholip_A2_4"/>
    <property type="match status" value="1"/>
</dbReference>
<dbReference type="SUPFAM" id="SSF88645">
    <property type="entry name" value="ssDNA viruses"/>
    <property type="match status" value="1"/>
</dbReference>
<gene>
    <name type="primary">VP1</name>
</gene>
<accession>C1IWT2</accession>
<accession>C1IWT3</accession>
<sequence>MPPIKRQPGGWVLPGYKYLGPFNPLDNGEPVNKADRAAQSHDKSYSELIKSGKNPYLYFNKADEKFIDDLKNDWSLGGIIGSSFFKLKRAVAPALGNKERAQKRHFYFANSNKGAKKSKNNEPKPSTSKMSENEIQDQQPSEPNDGQRGGGGGATGSVGGGKGSGVGISTGGWVGGSYFTDSYVITKNTRQFLVKIQNNHQYKTESIIPSNGGGKSQRCVSTPWSYFNFNQYSSHFSPQDWQRLTNEYKRFRPKGMHVKIYNLQIKQILSNGADVTYNNDLTAGVHIFCDGEHAYPNATHPWDEDVMPELPYQTWYLFQYGYIPTIHELAEMEDSNAVEKAIALQIPFFMLENSDHEVLRTGESAEFNFNFDCEWINNERAFIPPGLMFNPLVPTRRAQYIRRNGNTQASTSRVQPYAKPTSWMTGPGLLSAQRVGPAASDTAAWMVGVDPEGANINSGRAGVSSGFDPPAGSLRPTDLEYKVQWYQTPAGTNNDGNIISNPPLSMLRDQTLYRGNQTTYNLCSDVWMFPNQIWDRYPVTRENPIWCKQPRSDKHTTIDPFDGSIAMDHPPGTIFIKMAKIPVPSNNNADSYLNIYCTGQVSCEIVWEVERYATKNWRPERRHTALGLGIGGADEINPTYHVDKNGAYIQPTTWDMCFPVKTNINKVL</sequence>
<comment type="function">
    <text evidence="1 2">Capsid proteins self-assembles to form an icosahedral capsid with a T=1 symmetry, about 26 nm in diameter, and consisting of 60 copies of three size variants of the capsid proteins, VP1, and VP3, which differ by the presence of an N-terminal extension in the minor protein VP1. The capsid has a channel at the 5-fold axis and there are densities extending the 5-fold axis into the interior of the capsid. The capsid encapsulates the genomic ssDNA (By similarity). Binding to the host receptors also induces capsid rearrangements leading to surface exposure of VP1 N-terminus, specifically its phospholipase A2-like region. The additional N-terminal region of isoform Minor capsid protein VP1, called VP1u, may serve as a lipolytic enzyme to breach the endosomal membrane during entry into host cell and might contribute to virus transport to the nucleus (By similarity).</text>
</comment>
<comment type="catalytic activity">
    <reaction evidence="1">
        <text>a 1,2-diacyl-sn-glycero-3-phosphocholine + H2O = a 1-acyl-sn-glycero-3-phosphocholine + a fatty acid + H(+)</text>
        <dbReference type="Rhea" id="RHEA:15801"/>
        <dbReference type="ChEBI" id="CHEBI:15377"/>
        <dbReference type="ChEBI" id="CHEBI:15378"/>
        <dbReference type="ChEBI" id="CHEBI:28868"/>
        <dbReference type="ChEBI" id="CHEBI:57643"/>
        <dbReference type="ChEBI" id="CHEBI:58168"/>
        <dbReference type="EC" id="3.1.1.4"/>
    </reaction>
</comment>
<comment type="subunit">
    <molecule>Isoform Minor capsid protein VP1</molecule>
    <text evidence="1">Heteromultimer of isoform Minor capsid protein VP1, isoform Minor capsid protein VP2 and isoform Major capsid protein VP3 (By similarity).</text>
</comment>
<comment type="subunit">
    <molecule>Isoform Minor capsid protein VP2</molecule>
    <text evidence="1">Heteromultimer of isoform Minor capsid protein VP1, isoform Minor capsid protein VP2 and isoform Major capsid protein VP3 (By similarity).</text>
</comment>
<comment type="subunit">
    <molecule>Isoform Major capsid protein VP3</molecule>
    <text evidence="1">Homomultimer (By similarity). 10 fold more abundant than the minor capsid proteins VP1 and VP2 (By similarity). Heteromultimer of isoform Minor capsid protein VP1, isoform Minor capsid protein VP2 and isoform Major capsid protein VP3 (By similarity).</text>
</comment>
<comment type="subcellular location">
    <molecule>Isoform Minor capsid protein VP1</molecule>
    <subcellularLocation>
        <location evidence="1">Virion</location>
    </subcellularLocation>
    <subcellularLocation>
        <location evidence="1">Host nucleus</location>
    </subcellularLocation>
    <subcellularLocation>
        <location evidence="1">Host cytoplasm</location>
    </subcellularLocation>
    <text evidence="1">Slightly detected in the cytoplasm, mainly seen in the nucleus.</text>
</comment>
<comment type="subcellular location">
    <molecule>Isoform Minor capsid protein VP2</molecule>
    <subcellularLocation>
        <location evidence="1">Virion</location>
    </subcellularLocation>
</comment>
<comment type="subcellular location">
    <molecule>Isoform Major capsid protein VP3</molecule>
    <subcellularLocation>
        <location evidence="1">Virion</location>
    </subcellularLocation>
    <subcellularLocation>
        <location evidence="1">Host nucleus</location>
    </subcellularLocation>
    <subcellularLocation>
        <location evidence="1">Host cytoplasm</location>
    </subcellularLocation>
    <text evidence="1">Slightly detected in the cytoplasm, mainly seen in the nucleus.</text>
</comment>
<comment type="alternative products">
    <event type="alternative initiation"/>
    <isoform>
        <id>C1IWT2-1</id>
        <name>Minor capsid protein VP1</name>
        <sequence type="displayed"/>
    </isoform>
    <isoform>
        <id>C1IWT2-2</id>
        <name>Minor capsid protein VP2</name>
        <sequence type="described" ref="VSP_059860 VSP_059865"/>
    </isoform>
    <isoform>
        <id>C1IWT2-3</id>
        <name>Major capsid protein VP3</name>
        <sequence type="described" ref="VSP_059859"/>
    </isoform>
    <text evidence="1">The VP-encoding mRNA generates the three capsid proteins. Minor capsid protein VP1 and Major capsid protein VP3 initiate at canonical initiation site, whereas Minor capsid protein VP2 initiates at a GCT codon.</text>
</comment>
<comment type="domain">
    <text evidence="1 2">The N-terminus of Isoform Minor capsid protein VP1, VP1u, contains a phospholipase A2-like region (By similarity). VP1u may play a role in the disruption of host tight junctions in the airway tract (By similarity).</text>
</comment>
<comment type="domain">
    <text evidence="2">A nuclear localization signal is present in the C-terminus and can be recognized by cellular nuclear import molecules. After assembly, it is hidden because it is on the inner capsid surface.</text>
</comment>
<comment type="similarity">
    <text evidence="4">Belongs to the parvoviridae capsid protein family.</text>
</comment>
<comment type="caution">
    <text evidence="4">Isoform major capsid protein VP3 has former been designated as VP2.</text>
</comment>
<name>CAPSD_HBOC3</name>